<proteinExistence type="inferred from homology"/>
<protein>
    <recommendedName>
        <fullName>RNA-directed RNA polymerase L</fullName>
        <shortName>Protein L</shortName>
    </recommendedName>
    <alternativeName>
        <fullName>Large structural protein</fullName>
    </alternativeName>
    <alternativeName>
        <fullName>Replicase</fullName>
    </alternativeName>
    <alternativeName>
        <fullName>Transcriptase</fullName>
    </alternativeName>
    <domain>
        <recommendedName>
            <fullName>RNA-directed RNA polymerase</fullName>
            <ecNumber evidence="3">2.7.7.48</ecNumber>
        </recommendedName>
    </domain>
    <domain>
        <recommendedName>
            <fullName evidence="2">GTP phosphohydrolase</fullName>
            <ecNumber evidence="2">3.6.1.-</ecNumber>
        </recommendedName>
    </domain>
    <domain>
        <recommendedName>
            <fullName evidence="7">GDP polyribonucleotidyltransferase</fullName>
            <ecNumber evidence="2">2.7.7.88</ecNumber>
        </recommendedName>
        <alternativeName>
            <fullName evidence="7">PRNTase</fullName>
        </alternativeName>
    </domain>
    <domain>
        <recommendedName>
            <fullName evidence="7">mRNA cap methyltransferase</fullName>
            <ecNumber evidence="2">2.1.1.375</ecNumber>
        </recommendedName>
        <alternativeName>
            <fullName evidence="2">mRNA (guanine-N(7)-)-methyltransferase</fullName>
            <shortName evidence="2">G-N7-MTase</shortName>
        </alternativeName>
        <alternativeName>
            <fullName evidence="2">mRNA (nucleoside-2'-O-)-methyltransferase</fullName>
            <shortName evidence="2">N1-2'-O-MTase</shortName>
        </alternativeName>
    </domain>
</protein>
<accession>Q6UY63</accession>
<dbReference type="EC" id="2.7.7.48" evidence="3"/>
<dbReference type="EC" id="3.6.1.-" evidence="2"/>
<dbReference type="EC" id="2.7.7.88" evidence="2"/>
<dbReference type="EC" id="2.1.1.375" evidence="2"/>
<dbReference type="EMBL" id="AY358025">
    <property type="protein sequence ID" value="AAQ55261.1"/>
    <property type="molecule type" value="Genomic_RNA"/>
</dbReference>
<dbReference type="SMR" id="Q6UY63"/>
<dbReference type="Proteomes" id="UP000000838">
    <property type="component" value="Genome"/>
</dbReference>
<dbReference type="GO" id="GO:0030430">
    <property type="term" value="C:host cell cytoplasm"/>
    <property type="evidence" value="ECO:0007669"/>
    <property type="project" value="UniProtKB-SubCell"/>
</dbReference>
<dbReference type="GO" id="GO:0044423">
    <property type="term" value="C:virion component"/>
    <property type="evidence" value="ECO:0007669"/>
    <property type="project" value="UniProtKB-KW"/>
</dbReference>
<dbReference type="GO" id="GO:0005524">
    <property type="term" value="F:ATP binding"/>
    <property type="evidence" value="ECO:0007669"/>
    <property type="project" value="UniProtKB-KW"/>
</dbReference>
<dbReference type="GO" id="GO:0003924">
    <property type="term" value="F:GTPase activity"/>
    <property type="evidence" value="ECO:0007669"/>
    <property type="project" value="RHEA"/>
</dbReference>
<dbReference type="GO" id="GO:0004482">
    <property type="term" value="F:mRNA 5'-cap (guanine-N7-)-methyltransferase activity"/>
    <property type="evidence" value="ECO:0007669"/>
    <property type="project" value="InterPro"/>
</dbReference>
<dbReference type="GO" id="GO:0003968">
    <property type="term" value="F:RNA-directed RNA polymerase activity"/>
    <property type="evidence" value="ECO:0007669"/>
    <property type="project" value="UniProtKB-KW"/>
</dbReference>
<dbReference type="GO" id="GO:0039689">
    <property type="term" value="P:negative stranded viral RNA replication"/>
    <property type="evidence" value="ECO:0000250"/>
    <property type="project" value="UniProtKB"/>
</dbReference>
<dbReference type="GO" id="GO:0039697">
    <property type="term" value="P:negative stranded viral RNA transcription"/>
    <property type="evidence" value="ECO:0000250"/>
    <property type="project" value="UniProtKB"/>
</dbReference>
<dbReference type="InterPro" id="IPR039736">
    <property type="entry name" value="L_poly_C"/>
</dbReference>
<dbReference type="InterPro" id="IPR026890">
    <property type="entry name" value="Mononeg_mRNAcap"/>
</dbReference>
<dbReference type="InterPro" id="IPR014023">
    <property type="entry name" value="Mononeg_RNA_pol_cat"/>
</dbReference>
<dbReference type="InterPro" id="IPR025786">
    <property type="entry name" value="Mononega_L_MeTrfase"/>
</dbReference>
<dbReference type="InterPro" id="IPR017235">
    <property type="entry name" value="RNA-dir_pol_L_filovirus"/>
</dbReference>
<dbReference type="NCBIfam" id="TIGR04198">
    <property type="entry name" value="paramyx_RNAcap"/>
    <property type="match status" value="1"/>
</dbReference>
<dbReference type="Pfam" id="PF14318">
    <property type="entry name" value="Mononeg_mRNAcap"/>
    <property type="match status" value="1"/>
</dbReference>
<dbReference type="Pfam" id="PF00946">
    <property type="entry name" value="Mononeg_RNA_pol"/>
    <property type="match status" value="1"/>
</dbReference>
<dbReference type="PIRSF" id="PIRSF037548">
    <property type="entry name" value="RNA_pol_Filoviridae"/>
    <property type="match status" value="1"/>
</dbReference>
<dbReference type="PROSITE" id="PS50526">
    <property type="entry name" value="RDRP_SSRNA_NEG_NONSEG"/>
    <property type="match status" value="1"/>
</dbReference>
<dbReference type="PROSITE" id="PS51590">
    <property type="entry name" value="SAM_MT_MNV_L"/>
    <property type="match status" value="1"/>
</dbReference>
<reference key="1">
    <citation type="submission" date="2003-08" db="EMBL/GenBank/DDBJ databases">
        <authorList>
            <person name="Bowen M.D."/>
            <person name="Thurman K."/>
            <person name="Minor E."/>
            <person name="Ibrahim M.S."/>
            <person name="Meyer R.F."/>
            <person name="Malfatti S.A."/>
            <person name="Do L.H."/>
            <person name="Smith K.L."/>
            <person name="McCready P.M."/>
            <person name="Chain P.S.G."/>
        </authorList>
    </citation>
    <scope>NUCLEOTIDE SEQUENCE [GENOMIC RNA]</scope>
</reference>
<feature type="chain" id="PRO_0000314971" description="RNA-directed RNA polymerase L">
    <location>
        <begin position="1"/>
        <end position="2331"/>
    </location>
</feature>
<feature type="domain" description="RdRp catalytic" evidence="4">
    <location>
        <begin position="628"/>
        <end position="812"/>
    </location>
</feature>
<feature type="domain" description="Mononegavirus-type SAM-dependent 2'-O-MTase" evidence="5">
    <location>
        <begin position="1921"/>
        <end position="2118"/>
    </location>
</feature>
<feature type="region of interest" description="Disordered" evidence="6">
    <location>
        <begin position="1761"/>
        <end position="1782"/>
    </location>
</feature>
<feature type="compositionally biased region" description="Basic and acidic residues" evidence="6">
    <location>
        <begin position="1761"/>
        <end position="1775"/>
    </location>
</feature>
<gene>
    <name type="primary">L</name>
</gene>
<keyword id="KW-0067">ATP-binding</keyword>
<keyword id="KW-1035">Host cytoplasm</keyword>
<keyword id="KW-0378">Hydrolase</keyword>
<keyword id="KW-0489">Methyltransferase</keyword>
<keyword id="KW-0506">mRNA capping</keyword>
<keyword id="KW-0507">mRNA processing</keyword>
<keyword id="KW-0511">Multifunctional enzyme</keyword>
<keyword id="KW-0547">Nucleotide-binding</keyword>
<keyword id="KW-0548">Nucleotidyltransferase</keyword>
<keyword id="KW-0696">RNA-directed RNA polymerase</keyword>
<keyword id="KW-0949">S-adenosyl-L-methionine</keyword>
<keyword id="KW-0808">Transferase</keyword>
<keyword id="KW-0693">Viral RNA replication</keyword>
<keyword id="KW-0946">Virion</keyword>
<organismHost>
    <name type="scientific">Chlorocebus aethiops</name>
    <name type="common">Green monkey</name>
    <name type="synonym">Cercopithecus aethiops</name>
    <dbReference type="NCBI Taxonomy" id="9534"/>
</organismHost>
<organismHost>
    <name type="scientific">Homo sapiens</name>
    <name type="common">Human</name>
    <dbReference type="NCBI Taxonomy" id="9606"/>
</organismHost>
<organismHost>
    <name type="scientific">Rousettus aegyptiacus</name>
    <name type="common">Egyptian fruit bat</name>
    <name type="synonym">Pteropus aegyptiacus</name>
    <dbReference type="NCBI Taxonomy" id="9407"/>
</organismHost>
<sequence length="2331" mass="267213">MQHPTQYPDARLSSPIVLDQCDLLARSLGLYSHYSHNPKLRNCRIPHHIYRLRNSTALKTFLQNCSILTVPFHSIWDHILTSIQYDAINHVDDFKYLLPSELVKYANWDNEFLKTYLNKILRLDHVFPASARSQCEDFSPKENPYYWGMLLLVHLSQLARRIKGQRGSLRSNWKFIGTDLELFGIADFIIFKVPVKTIIRNAVSLQASKPGLRVWYRDQNLTPYLCDDEFIVSVASYECFIMIKDVFIERYNTWEICARAWLEDSDGADYPPLDVLGELYNYGDQIIAMYLEDGFKLIKHLEPLCVSCIQTHGIFTPRKYWFQSQMIKSYYDELCDLNLKLRISDNKAECAQNFIKTIIQARLTPQQYCELFSLQKHWGHPVLYNDVALDKVKKHAQATKILKPKVMFETFCVFKFIVAKNHYHSQGSWYKTTHDLHLTPYLRQHIVSNSFPSQAEIYQHLWEWYFVEHEPLFSTKIISDLSIFIKDRATAVNQECWDSVFDRSVLGYNPPVRFQSKRVPEQFLGQADFSLNQILDFAEKLEYLAPSYRNFSFSLKEKELNIGRTFGKLPYRVRNVQTLAEALLADGLAKAFPSNMMVVTEREQKEALLHQASWHHNSASIGENAIVRGASFVTDLEKYNLAFRYEFTRHFINYCNRCYGVKNLFDWMHFLIPLCYMHVSDFYSPPHCVTEDNRNNPPDCANAYHYHLGGIEGLQQKLWTCISCAQITLVELKTKLKLKSSVMGDNQCITTLSLFPIDAPNDYQENEAELNAARVAVELAITTGYSGIFLKPEETFVHSGFIYFGKKQYLNGVQLPQSLKTMARCGPLSDSIFDDLQGSLASIGTSFERGTSETRHIFPSRWIASFHSMLAINLLNQNHLGFPLGFNIDISCFKKPLTFSEKLIALITPQVLGGLSFLNPEKLFYRNISDPLTSGLFQLKNALEFLGKGELFYILIAKKPGLADASDFVMNPLGLNVPGSREIITFLRQTVRENITITSQNRIINSLFHIGSDLEDQKVCEWLLSSNPVMSRFAADIFSRTPSGKRLQVLGYLEGTRTLLASRTISLTTEGTMLMKLRELTRNRWKSWFSYIDALDDDLSESLEKFTCTVDVANFLRAYSWSDVLKGKRLIGATLPCLLEQFKVKWINLSEDLREQFNLSSESELTINLLPYDCKELRLGGSHDTELNYVSCALDRKVVQKHPSVKRLAWTIGNRAPYIGSRTEDKIGYPPLRVNCPSAALKEAIEMVSRLLWVTQGTADREKLLIPLLNSRVNLDYQTVLNFLPTHYSGNIVHRYNDQYGQHSFMANRMSNTSTRAIISTNTLGKYAGGGQAAIDSNIIFQNTINLGVAVLDIALSLAKLSSASNVTFRLMLNKCCTRHVPSEYLFFDKPLDVDLNKYMDNELVYDNDPLCSGIKGRLGRVSRSTLSLSLNVSDIGSYDFPTIAAWTLGETIVGSIFSDESSQSTDPISSGCTKTFVTHFLVYPVESIFYAFGANLIVESLSLSRIKSIKNLSDLTFLISSTIRNLSHRSLRILQSTFRHELVLTRLAHHIPLISLMLGGSAGEKSSSDAVRLFLTASYQNFIHNFSCLMKKGQSSLPVWLYFPSEGQQLKPILKILQRLSDLLSPDKVQRCKTLADTCCSIDSFWVYPSKSTRTNHYYASLNYWRDKANKVKNTPFSHLINCSFLELSSHTSSVSSNQQVTNSKYIVHPEDIPEINTRTKLIEYGSTALQRMDIKMPPSEQNLVENCRPSKDIRFKDNQKITKHDQRYEKKESSQQQMSPEDNMQTLAYMHNSSPSQTFIKSIDVHEDFDASRVILNSKINNFNLTDCTINTNLLTTPTGTEFLDTSPLQSSRYSSTPRERSLLSREQASYLYVDCSNIPSISLDPGFRNMSDQNQIQMLINAYKRDLHACFDSNQFCRFTGVVSSMHYKLYDLLPPGELRKAICLAEGEGSGARLLLKWKETDHLFFNTLATDSQQEAEILSGRVIPRMLYNIDRLSALLESRRLILNNLTIQITDITNPLWLDSVIQYLPEDSDILTMDAETTKDETREQLYKTIVNIWTRTSPNIPKISIIKVFLLDYEGTLFLMKNAIQYYGQVQLKKPYSSNAKNSEWYLCCSKRRIQRLQIDFPDQVGIFLICKAMSRQRQAIPYWLKHIEKNYPASLHEFFLTLGFPSLESSFCHRYTIPFSEGKALFHKVQSYVRQGKQHLHSLMLDYENNSPLLDLRNHFICSLRGKITKYYNDILKLNLVIKAVEKGKNWSQLVETLPNMHSVCIVHVDHECFGCEKRLLLKLDFIRNTKIAEQKLLNRVIGYILFFPFGLSKSRSLRA</sequence>
<evidence type="ECO:0000250" key="1"/>
<evidence type="ECO:0000250" key="2">
    <source>
        <dbReference type="UniProtKB" id="P03523"/>
    </source>
</evidence>
<evidence type="ECO:0000250" key="3">
    <source>
        <dbReference type="UniProtKB" id="P28887"/>
    </source>
</evidence>
<evidence type="ECO:0000255" key="4">
    <source>
        <dbReference type="PROSITE-ProRule" id="PRU00539"/>
    </source>
</evidence>
<evidence type="ECO:0000255" key="5">
    <source>
        <dbReference type="PROSITE-ProRule" id="PRU00923"/>
    </source>
</evidence>
<evidence type="ECO:0000256" key="6">
    <source>
        <dbReference type="SAM" id="MobiDB-lite"/>
    </source>
</evidence>
<evidence type="ECO:0000305" key="7"/>
<comment type="function">
    <text evidence="2">RNA-directed RNA polymerase that catalyzes the transcription of viral mRNAs, their capping and polyadenylation. The template is composed of the viral RNA tightly encapsidated by the nucleoprotein (N). The viral polymerase binds to the genomic RNA at the 3' leader promoter, and transcribes subsequently all viral mRNAs with a decreasing efficiency. The first gene is the most transcribed, and the last the least transcribed. The viral phosphoprotein acts as a processivity factor. Capping is concomitant with initiation of mRNA transcription. Indeed, a GDP polyribonucleotidyl transferase (PRNTase) adds the cap structure when the nascent RNA chain length has reached few nucleotides. Ribose 2'-O methylation of viral mRNA cap precedes and facilitates subsequent guanine-N-7 methylation, both activities being carried by the viral polymerase. Polyadenylation of mRNAs occur by a stuttering mechanism at a slipery stop site present at the end viral genes. After finishing transcription of a mRNA, the polymerase can resume transcription of the downstream gene.</text>
</comment>
<comment type="function">
    <text evidence="2">RNA-directed RNA polymerase that catalyzes the replication of viral genomic RNA. The template is composed of the viral RNA tightly encapsidated by the nucleoprotein (N). The replicase mode is dependent on intracellular N protein concentration. In this mode, the polymerase replicates the whole viral genome without recognizing transcriptional signals, and the replicated genome is not caped or polyadenylated.</text>
</comment>
<comment type="catalytic activity">
    <reaction evidence="4">
        <text>RNA(n) + a ribonucleoside 5'-triphosphate = RNA(n+1) + diphosphate</text>
        <dbReference type="Rhea" id="RHEA:21248"/>
        <dbReference type="Rhea" id="RHEA-COMP:14527"/>
        <dbReference type="Rhea" id="RHEA-COMP:17342"/>
        <dbReference type="ChEBI" id="CHEBI:33019"/>
        <dbReference type="ChEBI" id="CHEBI:61557"/>
        <dbReference type="ChEBI" id="CHEBI:140395"/>
        <dbReference type="EC" id="2.7.7.48"/>
    </reaction>
</comment>
<comment type="catalytic activity">
    <reaction evidence="2">
        <text>a 5'-end (5'-triphosphoguanosine)-adenylyl-adenylyl-cytidylyl-adenosine in mRNA + 2 S-adenosyl-L-methionine = a 5'-end (N(7)-methyl 5'-triphosphoguanosine)-(2'-O-methyladenylyl)-adenylyl-cytidylyl-adenosine in mRNA + 2 S-adenosyl-L-homocysteine + H(+)</text>
        <dbReference type="Rhea" id="RHEA:65376"/>
        <dbReference type="Rhea" id="RHEA-COMP:16797"/>
        <dbReference type="Rhea" id="RHEA-COMP:16798"/>
        <dbReference type="ChEBI" id="CHEBI:15378"/>
        <dbReference type="ChEBI" id="CHEBI:57856"/>
        <dbReference type="ChEBI" id="CHEBI:59789"/>
        <dbReference type="ChEBI" id="CHEBI:156483"/>
        <dbReference type="ChEBI" id="CHEBI:156484"/>
        <dbReference type="EC" id="2.1.1.375"/>
    </reaction>
</comment>
<comment type="catalytic activity">
    <reaction evidence="2">
        <text>a 5'-end (5'-triphosphoguanosine)-adenylyl-adenylyl-cytidylyl-adenosine in mRNA + S-adenosyl-L-methionine = a 5'-end (5'-triphosphoguanosine)-(2'-O-methyladenylyl)-adenylyl-cytidylyl-adenosine in mRNA + S-adenosyl-L-homocysteine + H(+)</text>
        <dbReference type="Rhea" id="RHEA:65380"/>
        <dbReference type="Rhea" id="RHEA-COMP:16797"/>
        <dbReference type="Rhea" id="RHEA-COMP:16801"/>
        <dbReference type="ChEBI" id="CHEBI:15378"/>
        <dbReference type="ChEBI" id="CHEBI:57856"/>
        <dbReference type="ChEBI" id="CHEBI:59789"/>
        <dbReference type="ChEBI" id="CHEBI:156482"/>
        <dbReference type="ChEBI" id="CHEBI:156484"/>
    </reaction>
</comment>
<comment type="catalytic activity">
    <reaction evidence="3">
        <text>a 5'-end triphospho-adenylyl-adenylyl-cytidylyl-adenosine in mRNA + GDP + H(+) = a 5'-end (5'-triphosphoguanosine)-adenylyl-adenylyl-cytidylyl-adenosine in mRNA + diphosphate</text>
        <dbReference type="Rhea" id="RHEA:65436"/>
        <dbReference type="Rhea" id="RHEA-COMP:16797"/>
        <dbReference type="Rhea" id="RHEA-COMP:16799"/>
        <dbReference type="ChEBI" id="CHEBI:15378"/>
        <dbReference type="ChEBI" id="CHEBI:33019"/>
        <dbReference type="ChEBI" id="CHEBI:58189"/>
        <dbReference type="ChEBI" id="CHEBI:156484"/>
        <dbReference type="ChEBI" id="CHEBI:156503"/>
        <dbReference type="EC" id="2.7.7.88"/>
    </reaction>
</comment>
<comment type="catalytic activity">
    <reaction evidence="2">
        <text>a 5'-end (5'-triphosphoguanosine)-(2'-O-methyladenylyl)-adenylyl-cytidylyl-adenosine in mRNA + S-adenosyl-L-methionine = a 5'-end (N(7)-methyl 5'-triphosphoguanosine)-(2'-O-methyladenylyl)-adenylyl-cytidylyl-adenosine in mRNA + S-adenosyl-L-homocysteine</text>
        <dbReference type="Rhea" id="RHEA:65440"/>
        <dbReference type="Rhea" id="RHEA-COMP:16798"/>
        <dbReference type="Rhea" id="RHEA-COMP:16801"/>
        <dbReference type="ChEBI" id="CHEBI:57856"/>
        <dbReference type="ChEBI" id="CHEBI:59789"/>
        <dbReference type="ChEBI" id="CHEBI:156482"/>
        <dbReference type="ChEBI" id="CHEBI:156483"/>
    </reaction>
</comment>
<comment type="catalytic activity">
    <reaction evidence="3">
        <text>GTP + H2O = GDP + phosphate + H(+)</text>
        <dbReference type="Rhea" id="RHEA:19669"/>
        <dbReference type="ChEBI" id="CHEBI:15377"/>
        <dbReference type="ChEBI" id="CHEBI:15378"/>
        <dbReference type="ChEBI" id="CHEBI:37565"/>
        <dbReference type="ChEBI" id="CHEBI:43474"/>
        <dbReference type="ChEBI" id="CHEBI:58189"/>
    </reaction>
</comment>
<comment type="subcellular location">
    <subcellularLocation>
        <location>Host cytoplasm</location>
    </subcellularLocation>
    <subcellularLocation>
        <location evidence="1">Virion</location>
    </subcellularLocation>
</comment>
<name>L_MABVO</name>
<organism>
    <name type="scientific">Lake Victoria marburgvirus (strain Ozolin-75)</name>
    <name type="common">MARV</name>
    <name type="synonym">Marburg virus (strain South Africa/Ozolin/1975)</name>
    <dbReference type="NCBI Taxonomy" id="482820"/>
    <lineage>
        <taxon>Viruses</taxon>
        <taxon>Riboviria</taxon>
        <taxon>Orthornavirae</taxon>
        <taxon>Negarnaviricota</taxon>
        <taxon>Haploviricotina</taxon>
        <taxon>Monjiviricetes</taxon>
        <taxon>Mononegavirales</taxon>
        <taxon>Filoviridae</taxon>
        <taxon>Orthomarburgvirus</taxon>
        <taxon>Orthomarburgvirus marburgense</taxon>
    </lineage>
</organism>